<dbReference type="EMBL" id="BC079278">
    <property type="protein sequence ID" value="AAH79278.1"/>
    <property type="molecule type" value="mRNA"/>
</dbReference>
<dbReference type="RefSeq" id="NP_001014014.1">
    <property type="nucleotide sequence ID" value="NM_001013992.1"/>
</dbReference>
<dbReference type="FunCoup" id="Q6AXX3">
    <property type="interactions" value="89"/>
</dbReference>
<dbReference type="STRING" id="10116.ENSRNOP00000035178"/>
<dbReference type="iPTMnet" id="Q6AXX3"/>
<dbReference type="PhosphoSitePlus" id="Q6AXX3"/>
<dbReference type="PaxDb" id="10116-ENSRNOP00000035178"/>
<dbReference type="GeneID" id="305691"/>
<dbReference type="KEGG" id="rno:305691"/>
<dbReference type="AGR" id="RGD:1359606"/>
<dbReference type="CTD" id="305691"/>
<dbReference type="RGD" id="1359606">
    <property type="gene designation" value="LOC305691"/>
</dbReference>
<dbReference type="eggNOG" id="ENOG502QY40">
    <property type="taxonomic scope" value="Eukaryota"/>
</dbReference>
<dbReference type="InParanoid" id="Q6AXX3"/>
<dbReference type="PhylomeDB" id="Q6AXX3"/>
<dbReference type="PRO" id="PR:Q6AXX3"/>
<dbReference type="Proteomes" id="UP000002494">
    <property type="component" value="Unplaced"/>
</dbReference>
<dbReference type="GO" id="GO:0005634">
    <property type="term" value="C:nucleus"/>
    <property type="evidence" value="ECO:0000318"/>
    <property type="project" value="GO_Central"/>
</dbReference>
<dbReference type="GO" id="GO:1990837">
    <property type="term" value="F:sequence-specific double-stranded DNA binding"/>
    <property type="evidence" value="ECO:0000266"/>
    <property type="project" value="RGD"/>
</dbReference>
<dbReference type="GO" id="GO:0008270">
    <property type="term" value="F:zinc ion binding"/>
    <property type="evidence" value="ECO:0007669"/>
    <property type="project" value="UniProtKB-KW"/>
</dbReference>
<dbReference type="FunFam" id="3.30.160.60:FF:000276">
    <property type="entry name" value="zinc finger protein 385A isoform X3"/>
    <property type="match status" value="1"/>
</dbReference>
<dbReference type="FunFam" id="3.30.160.60:FF:000121">
    <property type="entry name" value="zinc finger protein 385B isoform X1"/>
    <property type="match status" value="1"/>
</dbReference>
<dbReference type="FunFam" id="3.30.160.60:FF:000293">
    <property type="entry name" value="zinc finger protein 385B isoform X3"/>
    <property type="match status" value="1"/>
</dbReference>
<dbReference type="Gene3D" id="3.30.160.60">
    <property type="entry name" value="Classic Zinc Finger"/>
    <property type="match status" value="3"/>
</dbReference>
<dbReference type="InterPro" id="IPR003604">
    <property type="entry name" value="Matrin/U1-like-C_Znf_C2H2"/>
</dbReference>
<dbReference type="InterPro" id="IPR051845">
    <property type="entry name" value="Znf385"/>
</dbReference>
<dbReference type="InterPro" id="IPR036236">
    <property type="entry name" value="Znf_C2H2_sf"/>
</dbReference>
<dbReference type="InterPro" id="IPR013087">
    <property type="entry name" value="Znf_C2H2_type"/>
</dbReference>
<dbReference type="PANTHER" id="PTHR23067">
    <property type="entry name" value="DOUBLE-STRANDED RNA-BINDING ZINC FINGER PROTEIN"/>
    <property type="match status" value="1"/>
</dbReference>
<dbReference type="PANTHER" id="PTHR23067:SF12">
    <property type="entry name" value="ZINC FINGER PROTEIN 385D"/>
    <property type="match status" value="1"/>
</dbReference>
<dbReference type="Pfam" id="PF12874">
    <property type="entry name" value="zf-met"/>
    <property type="match status" value="3"/>
</dbReference>
<dbReference type="SMART" id="SM00355">
    <property type="entry name" value="ZnF_C2H2"/>
    <property type="match status" value="3"/>
</dbReference>
<dbReference type="SMART" id="SM00451">
    <property type="entry name" value="ZnF_U1"/>
    <property type="match status" value="3"/>
</dbReference>
<dbReference type="SUPFAM" id="SSF57667">
    <property type="entry name" value="beta-beta-alpha zinc fingers"/>
    <property type="match status" value="3"/>
</dbReference>
<comment type="subcellular location">
    <subcellularLocation>
        <location evidence="2">Nucleus</location>
    </subcellularLocation>
</comment>
<name>Z385D_RAT</name>
<reference key="1">
    <citation type="journal article" date="2004" name="Genome Res.">
        <title>The status, quality, and expansion of the NIH full-length cDNA project: the Mammalian Gene Collection (MGC).</title>
        <authorList>
            <consortium name="The MGC Project Team"/>
        </authorList>
    </citation>
    <scope>NUCLEOTIDE SEQUENCE [LARGE SCALE MRNA]</scope>
    <source>
        <tissue>Testis</tissue>
    </source>
</reference>
<accession>Q6AXX3</accession>
<keyword id="KW-0479">Metal-binding</keyword>
<keyword id="KW-0539">Nucleus</keyword>
<keyword id="KW-1185">Reference proteome</keyword>
<keyword id="KW-0677">Repeat</keyword>
<keyword id="KW-0862">Zinc</keyword>
<keyword id="KW-0863">Zinc-finger</keyword>
<feature type="chain" id="PRO_0000191820" description="Zinc finger protein 385D">
    <location>
        <begin position="1"/>
        <end position="395"/>
    </location>
</feature>
<feature type="zinc finger region" description="Matrin-type 1">
    <location>
        <begin position="80"/>
        <end position="110"/>
    </location>
</feature>
<feature type="zinc finger region" description="Matrin-type 2">
    <location>
        <begin position="204"/>
        <end position="234"/>
    </location>
</feature>
<feature type="zinc finger region" description="Matrin-type 3">
    <location>
        <begin position="267"/>
        <end position="297"/>
    </location>
</feature>
<feature type="region of interest" description="Disordered" evidence="1">
    <location>
        <begin position="282"/>
        <end position="308"/>
    </location>
</feature>
<protein>
    <recommendedName>
        <fullName>Zinc finger protein 385D</fullName>
    </recommendedName>
    <alternativeName>
        <fullName>Zinc finger protein 659</fullName>
    </alternativeName>
</protein>
<gene>
    <name type="primary">Znf385d</name>
    <name type="synonym">Znf659</name>
</gene>
<proteinExistence type="evidence at transcript level"/>
<sequence length="395" mass="42480">MRKIMYFGGTCQSPALPALIHPPAPPLQPSLDIKPFLPFPLDTAATVNLFPNFNAMDPIQKAVINHTFGFPLPHRKKQIISCNICQLRFNSDSQAAAHYKGTKHAKKLKALESMKNKQKSVTAKDSAKTTFTSITTNPITTSSDKTESTAGTQVIARSADMRKSSEVTTELTSNAEKSLTAAVAAGNNSSPPTETEEEKAKRLLYCSLCKVAVNSASQLEAHNSGTKHKTMLEARNGSGTIKAFPRAGMKGKGPVNKGNTGLQNKTFHCEICDVHVNSETQLKQHISSRRHKDRASGKPPKPKYSPYNKLQKAAHPLGVKLVFSKEPSKPLTPRILPNPLAAAAAAAAVAVNSPFSLRTAPAATLFQTSALPPALLRPAPGPIRTTHTPVLFSPY</sequence>
<organism>
    <name type="scientific">Rattus norvegicus</name>
    <name type="common">Rat</name>
    <dbReference type="NCBI Taxonomy" id="10116"/>
    <lineage>
        <taxon>Eukaryota</taxon>
        <taxon>Metazoa</taxon>
        <taxon>Chordata</taxon>
        <taxon>Craniata</taxon>
        <taxon>Vertebrata</taxon>
        <taxon>Euteleostomi</taxon>
        <taxon>Mammalia</taxon>
        <taxon>Eutheria</taxon>
        <taxon>Euarchontoglires</taxon>
        <taxon>Glires</taxon>
        <taxon>Rodentia</taxon>
        <taxon>Myomorpha</taxon>
        <taxon>Muroidea</taxon>
        <taxon>Muridae</taxon>
        <taxon>Murinae</taxon>
        <taxon>Rattus</taxon>
    </lineage>
</organism>
<evidence type="ECO:0000256" key="1">
    <source>
        <dbReference type="SAM" id="MobiDB-lite"/>
    </source>
</evidence>
<evidence type="ECO:0000305" key="2"/>